<reference key="1">
    <citation type="submission" date="2006-02" db="EMBL/GenBank/DDBJ databases">
        <title>Complete sequence of chromosome of Jannaschia sp. CCS1.</title>
        <authorList>
            <consortium name="US DOE Joint Genome Institute"/>
            <person name="Copeland A."/>
            <person name="Lucas S."/>
            <person name="Lapidus A."/>
            <person name="Barry K."/>
            <person name="Detter J.C."/>
            <person name="Glavina del Rio T."/>
            <person name="Hammon N."/>
            <person name="Israni S."/>
            <person name="Pitluck S."/>
            <person name="Brettin T."/>
            <person name="Bruce D."/>
            <person name="Han C."/>
            <person name="Tapia R."/>
            <person name="Gilna P."/>
            <person name="Chertkov O."/>
            <person name="Saunders E."/>
            <person name="Schmutz J."/>
            <person name="Larimer F."/>
            <person name="Land M."/>
            <person name="Kyrpides N."/>
            <person name="Lykidis A."/>
            <person name="Moran M.A."/>
            <person name="Belas R."/>
            <person name="Ye W."/>
            <person name="Buchan A."/>
            <person name="Gonzalez J.M."/>
            <person name="Schell M.A."/>
            <person name="Richardson P."/>
        </authorList>
    </citation>
    <scope>NUCLEOTIDE SEQUENCE [LARGE SCALE GENOMIC DNA]</scope>
    <source>
        <strain>CCS1</strain>
    </source>
</reference>
<protein>
    <recommendedName>
        <fullName evidence="1">Cobyric acid synthase</fullName>
    </recommendedName>
</protein>
<dbReference type="EMBL" id="CP000264">
    <property type="protein sequence ID" value="ABD55854.1"/>
    <property type="molecule type" value="Genomic_DNA"/>
</dbReference>
<dbReference type="RefSeq" id="WP_011456058.1">
    <property type="nucleotide sequence ID" value="NC_007802.1"/>
</dbReference>
<dbReference type="SMR" id="Q28N58"/>
<dbReference type="STRING" id="290400.Jann_2937"/>
<dbReference type="KEGG" id="jan:Jann_2937"/>
<dbReference type="eggNOG" id="COG1492">
    <property type="taxonomic scope" value="Bacteria"/>
</dbReference>
<dbReference type="HOGENOM" id="CLU_019250_2_2_5"/>
<dbReference type="OrthoDB" id="9808302at2"/>
<dbReference type="UniPathway" id="UPA00148"/>
<dbReference type="Proteomes" id="UP000008326">
    <property type="component" value="Chromosome"/>
</dbReference>
<dbReference type="GO" id="GO:0015420">
    <property type="term" value="F:ABC-type vitamin B12 transporter activity"/>
    <property type="evidence" value="ECO:0007669"/>
    <property type="project" value="UniProtKB-UniRule"/>
</dbReference>
<dbReference type="GO" id="GO:0003824">
    <property type="term" value="F:catalytic activity"/>
    <property type="evidence" value="ECO:0007669"/>
    <property type="project" value="InterPro"/>
</dbReference>
<dbReference type="GO" id="GO:0009236">
    <property type="term" value="P:cobalamin biosynthetic process"/>
    <property type="evidence" value="ECO:0007669"/>
    <property type="project" value="UniProtKB-UniRule"/>
</dbReference>
<dbReference type="CDD" id="cd05389">
    <property type="entry name" value="CobQ_N"/>
    <property type="match status" value="1"/>
</dbReference>
<dbReference type="CDD" id="cd01750">
    <property type="entry name" value="GATase1_CobQ"/>
    <property type="match status" value="1"/>
</dbReference>
<dbReference type="Gene3D" id="3.40.50.880">
    <property type="match status" value="1"/>
</dbReference>
<dbReference type="Gene3D" id="3.40.50.300">
    <property type="entry name" value="P-loop containing nucleotide triphosphate hydrolases"/>
    <property type="match status" value="1"/>
</dbReference>
<dbReference type="HAMAP" id="MF_00028">
    <property type="entry name" value="CobQ"/>
    <property type="match status" value="1"/>
</dbReference>
<dbReference type="InterPro" id="IPR029062">
    <property type="entry name" value="Class_I_gatase-like"/>
</dbReference>
<dbReference type="InterPro" id="IPR002586">
    <property type="entry name" value="CobQ/CobB/MinD/ParA_Nub-bd_dom"/>
</dbReference>
<dbReference type="InterPro" id="IPR033949">
    <property type="entry name" value="CobQ_GATase1"/>
</dbReference>
<dbReference type="InterPro" id="IPR047045">
    <property type="entry name" value="CobQ_N"/>
</dbReference>
<dbReference type="InterPro" id="IPR004459">
    <property type="entry name" value="CobQ_synth"/>
</dbReference>
<dbReference type="InterPro" id="IPR011698">
    <property type="entry name" value="GATase_3"/>
</dbReference>
<dbReference type="InterPro" id="IPR027417">
    <property type="entry name" value="P-loop_NTPase"/>
</dbReference>
<dbReference type="NCBIfam" id="TIGR00313">
    <property type="entry name" value="cobQ"/>
    <property type="match status" value="1"/>
</dbReference>
<dbReference type="NCBIfam" id="NF001989">
    <property type="entry name" value="PRK00784.1"/>
    <property type="match status" value="1"/>
</dbReference>
<dbReference type="PANTHER" id="PTHR21343:SF1">
    <property type="entry name" value="COBYRIC ACID SYNTHASE"/>
    <property type="match status" value="1"/>
</dbReference>
<dbReference type="PANTHER" id="PTHR21343">
    <property type="entry name" value="DETHIOBIOTIN SYNTHETASE"/>
    <property type="match status" value="1"/>
</dbReference>
<dbReference type="Pfam" id="PF01656">
    <property type="entry name" value="CbiA"/>
    <property type="match status" value="1"/>
</dbReference>
<dbReference type="Pfam" id="PF07685">
    <property type="entry name" value="GATase_3"/>
    <property type="match status" value="1"/>
</dbReference>
<dbReference type="SUPFAM" id="SSF52317">
    <property type="entry name" value="Class I glutamine amidotransferase-like"/>
    <property type="match status" value="1"/>
</dbReference>
<dbReference type="SUPFAM" id="SSF52540">
    <property type="entry name" value="P-loop containing nucleoside triphosphate hydrolases"/>
    <property type="match status" value="1"/>
</dbReference>
<dbReference type="PROSITE" id="PS51274">
    <property type="entry name" value="GATASE_COBBQ"/>
    <property type="match status" value="1"/>
</dbReference>
<evidence type="ECO:0000255" key="1">
    <source>
        <dbReference type="HAMAP-Rule" id="MF_00028"/>
    </source>
</evidence>
<accession>Q28N58</accession>
<comment type="function">
    <text evidence="1">Catalyzes amidations at positions B, D, E, and G on adenosylcobyrinic A,C-diamide. NH(2) groups are provided by glutamine, and one molecule of ATP is hydrogenolyzed for each amidation.</text>
</comment>
<comment type="pathway">
    <text evidence="1">Cofactor biosynthesis; adenosylcobalamin biosynthesis.</text>
</comment>
<comment type="similarity">
    <text evidence="1">Belongs to the CobB/CobQ family. CobQ subfamily.</text>
</comment>
<name>COBQ_JANSC</name>
<proteinExistence type="inferred from homology"/>
<sequence>MSRALMIQGTGSNVGKSMLAAGLCRIARNRGLSVAPFKPQNMSNNAAVTADGGEIGRAQALQAMACGLEPHTDMNPVLLKPETETGSQVVVQGKRFTTVRARDYAKLKPQLMQAVLDSFKRLKAAHDLVIVEGAGSPAEVNLRNGDIANMGFAQASGTPVVLCGDIDRGGVIAQIVGTQAVMSAEDVALVRGFMINKFRGDPSLFDDGYKLIEQHTGWQGFGVIPWFADAGNLPAEDALDITTRTRDTGLHIVCLRLSRIANFDDMDPLAQEPGVRLTMLNAGEAIPGDADMVIIPGSKSTRGDLAYLRAQGWDLDLRAHLRRGGHVLGICGGYQMLGGSVADPEGVEGPAGTDEGLGLLDVETVMTGDKRLTRVAAIHAPSGTAFNGYEIHIGRTSGPDAARPFAVVNGQPEGAISGDGRVSGSYLHGMFRDDAFRAAWLAQFGVAQSVSYDATVQATLDALAAHLEGVMDIDALLDVRL</sequence>
<keyword id="KW-0169">Cobalamin biosynthesis</keyword>
<keyword id="KW-0315">Glutamine amidotransferase</keyword>
<keyword id="KW-1185">Reference proteome</keyword>
<organism>
    <name type="scientific">Jannaschia sp. (strain CCS1)</name>
    <dbReference type="NCBI Taxonomy" id="290400"/>
    <lineage>
        <taxon>Bacteria</taxon>
        <taxon>Pseudomonadati</taxon>
        <taxon>Pseudomonadota</taxon>
        <taxon>Alphaproteobacteria</taxon>
        <taxon>Rhodobacterales</taxon>
        <taxon>Roseobacteraceae</taxon>
        <taxon>Jannaschia</taxon>
    </lineage>
</organism>
<feature type="chain" id="PRO_1000002360" description="Cobyric acid synthase">
    <location>
        <begin position="1"/>
        <end position="481"/>
    </location>
</feature>
<feature type="domain" description="GATase cobBQ-type" evidence="1">
    <location>
        <begin position="249"/>
        <end position="436"/>
    </location>
</feature>
<feature type="active site" description="Nucleophile" evidence="1">
    <location>
        <position position="331"/>
    </location>
</feature>
<feature type="active site" evidence="1">
    <location>
        <position position="428"/>
    </location>
</feature>
<gene>
    <name evidence="1" type="primary">cobQ</name>
    <name type="ordered locus">Jann_2937</name>
</gene>